<gene>
    <name evidence="1" type="primary">matK</name>
</gene>
<sequence length="499" mass="60117">MEEFQVYLELHKAHNFLYPLFFQEYIYALAHNHRLNRLNRSSLFQNGDYDNKFSSLIVKRLIFRMYQQNNFIISTKNLNQNTFFSHNKNLYYQIISVVLAVIVEIPFSIRFISSLEGKELVKSHNLQSIHSIFPFLEDKFSHLNYVLNVLIPHPIHLEILLQTLRYWIKDASSLHLLRFYLYEYSNLKNFFIPKKSTLNPRFFLFLYNSYVYQYESILFFLRKQSSHLQSNSFGILIERIYFYGKIESLLKVFIKKFQDILWLSKDPFMHYVRYRGKSILASKHGPLLISKWKYYFVNLWQCHFYVWSQSKRVHIKQLSKDYLNFLGYLSSLRLNFLVVRSQMLENSYLIDNVIKKFHTKIPMSSIIASLAKARFCNVLGHPISKSTWTDSSDSEILDRFVRIYRNLAHYYSGSSKKKNLYRIKYILRVSCVKTLARKHKSTVRAFLKRLGSDFLEEFLLEEEQVLSLMFSRVFSVSQRFYRVRIWYLDIFYINDFVNH</sequence>
<name>MATK_BATMA</name>
<reference key="1">
    <citation type="journal article" date="2004" name="Syst. Bot.">
        <title>Molecular phylogenetics of core Brassicales, placement of orphan genera, Emblingia, Forchhammeria, Tirania, and character evolution.</title>
        <authorList>
            <person name="Hall J.C."/>
            <person name="Iltis H.H."/>
            <person name="Sytsma K.J."/>
        </authorList>
        <dbReference type="AGRICOLA" id="IND43653588"/>
    </citation>
    <scope>NUCLEOTIDE SEQUENCE [GENOMIC DNA]</scope>
</reference>
<comment type="function">
    <text evidence="1">Usually encoded in the trnK tRNA gene intron. Probably assists in splicing its own and other chloroplast group II introns.</text>
</comment>
<comment type="subcellular location">
    <subcellularLocation>
        <location>Plastid</location>
        <location>Chloroplast</location>
    </subcellularLocation>
</comment>
<comment type="similarity">
    <text evidence="1">Belongs to the intron maturase 2 family. MatK subfamily.</text>
</comment>
<geneLocation type="chloroplast"/>
<accession>Q5VH50</accession>
<evidence type="ECO:0000255" key="1">
    <source>
        <dbReference type="HAMAP-Rule" id="MF_01390"/>
    </source>
</evidence>
<feature type="chain" id="PRO_0000143279" description="Maturase K">
    <location>
        <begin position="1"/>
        <end position="499"/>
    </location>
</feature>
<keyword id="KW-0150">Chloroplast</keyword>
<keyword id="KW-0507">mRNA processing</keyword>
<keyword id="KW-0934">Plastid</keyword>
<keyword id="KW-0694">RNA-binding</keyword>
<keyword id="KW-0819">tRNA processing</keyword>
<proteinExistence type="inferred from homology"/>
<organism>
    <name type="scientific">Batis maritima</name>
    <name type="common">Maritime saltwort</name>
    <dbReference type="NCBI Taxonomy" id="4436"/>
    <lineage>
        <taxon>Eukaryota</taxon>
        <taxon>Viridiplantae</taxon>
        <taxon>Streptophyta</taxon>
        <taxon>Embryophyta</taxon>
        <taxon>Tracheophyta</taxon>
        <taxon>Spermatophyta</taxon>
        <taxon>Magnoliopsida</taxon>
        <taxon>eudicotyledons</taxon>
        <taxon>Gunneridae</taxon>
        <taxon>Pentapetalae</taxon>
        <taxon>rosids</taxon>
        <taxon>malvids</taxon>
        <taxon>Brassicales</taxon>
        <taxon>Bataceae</taxon>
        <taxon>Batis</taxon>
    </lineage>
</organism>
<dbReference type="EMBL" id="AY483219">
    <property type="protein sequence ID" value="AAS77354.1"/>
    <property type="molecule type" value="Genomic_DNA"/>
</dbReference>
<dbReference type="GO" id="GO:0009507">
    <property type="term" value="C:chloroplast"/>
    <property type="evidence" value="ECO:0007669"/>
    <property type="project" value="UniProtKB-SubCell"/>
</dbReference>
<dbReference type="GO" id="GO:0003723">
    <property type="term" value="F:RNA binding"/>
    <property type="evidence" value="ECO:0007669"/>
    <property type="project" value="UniProtKB-KW"/>
</dbReference>
<dbReference type="GO" id="GO:0006397">
    <property type="term" value="P:mRNA processing"/>
    <property type="evidence" value="ECO:0007669"/>
    <property type="project" value="UniProtKB-KW"/>
</dbReference>
<dbReference type="GO" id="GO:0008380">
    <property type="term" value="P:RNA splicing"/>
    <property type="evidence" value="ECO:0007669"/>
    <property type="project" value="UniProtKB-UniRule"/>
</dbReference>
<dbReference type="GO" id="GO:0008033">
    <property type="term" value="P:tRNA processing"/>
    <property type="evidence" value="ECO:0007669"/>
    <property type="project" value="UniProtKB-KW"/>
</dbReference>
<dbReference type="HAMAP" id="MF_01390">
    <property type="entry name" value="MatK"/>
    <property type="match status" value="1"/>
</dbReference>
<dbReference type="InterPro" id="IPR024937">
    <property type="entry name" value="Domain_X"/>
</dbReference>
<dbReference type="InterPro" id="IPR002866">
    <property type="entry name" value="Maturase_MatK"/>
</dbReference>
<dbReference type="InterPro" id="IPR024942">
    <property type="entry name" value="Maturase_MatK_N"/>
</dbReference>
<dbReference type="PANTHER" id="PTHR34811">
    <property type="entry name" value="MATURASE K"/>
    <property type="match status" value="1"/>
</dbReference>
<dbReference type="PANTHER" id="PTHR34811:SF1">
    <property type="entry name" value="MATURASE K"/>
    <property type="match status" value="1"/>
</dbReference>
<dbReference type="Pfam" id="PF01348">
    <property type="entry name" value="Intron_maturas2"/>
    <property type="match status" value="1"/>
</dbReference>
<dbReference type="Pfam" id="PF01824">
    <property type="entry name" value="MatK_N"/>
    <property type="match status" value="1"/>
</dbReference>
<protein>
    <recommendedName>
        <fullName evidence="1">Maturase K</fullName>
    </recommendedName>
    <alternativeName>
        <fullName evidence="1">Intron maturase</fullName>
    </alternativeName>
</protein>